<evidence type="ECO:0000255" key="1"/>
<evidence type="ECO:0000255" key="2">
    <source>
        <dbReference type="PROSITE-ProRule" id="PRU00202"/>
    </source>
</evidence>
<evidence type="ECO:0000256" key="3">
    <source>
        <dbReference type="SAM" id="MobiDB-lite"/>
    </source>
</evidence>
<evidence type="ECO:0000269" key="4">
    <source>
    </source>
</evidence>
<evidence type="ECO:0000305" key="5"/>
<evidence type="ECO:0007829" key="6">
    <source>
        <dbReference type="PDB" id="1HS7"/>
    </source>
</evidence>
<accession>Q12241</accession>
<accession>D6W2G5</accession>
<organism>
    <name type="scientific">Saccharomyces cerevisiae (strain ATCC 204508 / S288c)</name>
    <name type="common">Baker's yeast</name>
    <dbReference type="NCBI Taxonomy" id="559292"/>
    <lineage>
        <taxon>Eukaryota</taxon>
        <taxon>Fungi</taxon>
        <taxon>Dikarya</taxon>
        <taxon>Ascomycota</taxon>
        <taxon>Saccharomycotina</taxon>
        <taxon>Saccharomycetes</taxon>
        <taxon>Saccharomycetales</taxon>
        <taxon>Saccharomycetaceae</taxon>
        <taxon>Saccharomyces</taxon>
    </lineage>
</organism>
<proteinExistence type="evidence at protein level"/>
<comment type="function">
    <text>Required for vacuolar assembly. Provides the t-SNARE function in a late step of the vacuolar assembly. Required for homotypic vacuole membrane fusion, autophagy and fusion of biosynthetic transport vesicles with the vacuole. Required for the delivery of alpha-factor receptor-ligand complexes to the vacuole.</text>
</comment>
<comment type="subunit">
    <text>Associates with VAM7.</text>
</comment>
<comment type="interaction">
    <interactant intactId="EBI-20227">
        <id>Q12241</id>
    </interactant>
    <interactant intactId="EBI-35465">
        <id>Q12255</id>
        <label>NYV1</label>
    </interactant>
    <organismsDiffer>false</organismsDiffer>
    <experiments>21</experiments>
</comment>
<comment type="interaction">
    <interactant intactId="EBI-20227">
        <id>Q12241</id>
    </interactant>
    <interactant intactId="EBI-20232">
        <id>P32912</id>
        <label>VAM7</label>
    </interactant>
    <organismsDiffer>false</organismsDiffer>
    <experiments>12</experiments>
</comment>
<comment type="interaction">
    <interactant intactId="EBI-20227">
        <id>Q12241</id>
    </interactant>
    <interactant intactId="EBI-20395">
        <id>P20795</id>
        <label>VPS33</label>
    </interactant>
    <organismsDiffer>false</organismsDiffer>
    <experiments>12</experiments>
</comment>
<comment type="interaction">
    <interactant intactId="EBI-20227">
        <id>Q12241</id>
    </interactant>
    <interactant intactId="EBI-20519">
        <id>Q04338</id>
        <label>VTI1</label>
    </interactant>
    <organismsDiffer>false</organismsDiffer>
    <experiments>13</experiments>
</comment>
<comment type="subcellular location">
    <subcellularLocation>
        <location>Vacuole membrane</location>
        <topology>Single-pass type IV membrane protein</topology>
    </subcellularLocation>
</comment>
<comment type="miscellaneous">
    <text evidence="4">Present with 414 molecules/cell in log phase SD medium.</text>
</comment>
<comment type="similarity">
    <text evidence="5">Belongs to the syntaxin family.</text>
</comment>
<feature type="chain" id="PRO_0000210280" description="Syntaxin VAM3">
    <location>
        <begin position="1"/>
        <end position="283"/>
    </location>
</feature>
<feature type="topological domain" description="Cytoplasmic" evidence="1">
    <location>
        <begin position="1"/>
        <end position="261"/>
    </location>
</feature>
<feature type="transmembrane region" description="Helical; Anchor for type IV membrane protein" evidence="1">
    <location>
        <begin position="262"/>
        <end position="282"/>
    </location>
</feature>
<feature type="topological domain" description="Vacuolar" evidence="1">
    <location>
        <position position="283"/>
    </location>
</feature>
<feature type="domain" description="t-SNARE coiled-coil homology" evidence="2">
    <location>
        <begin position="190"/>
        <end position="252"/>
    </location>
</feature>
<feature type="region of interest" description="Disordered" evidence="3">
    <location>
        <begin position="1"/>
        <end position="26"/>
    </location>
</feature>
<feature type="region of interest" description="Disordered" evidence="3">
    <location>
        <begin position="116"/>
        <end position="146"/>
    </location>
</feature>
<feature type="region of interest" description="Disordered" evidence="3">
    <location>
        <begin position="162"/>
        <end position="182"/>
    </location>
</feature>
<feature type="coiled-coil region" evidence="1">
    <location>
        <begin position="28"/>
        <end position="48"/>
    </location>
</feature>
<feature type="coiled-coil region" evidence="1">
    <location>
        <begin position="84"/>
        <end position="111"/>
    </location>
</feature>
<feature type="coiled-coil region" evidence="1">
    <location>
        <begin position="169"/>
        <end position="189"/>
    </location>
</feature>
<feature type="compositionally biased region" description="Polar residues" evidence="3">
    <location>
        <begin position="8"/>
        <end position="25"/>
    </location>
</feature>
<feature type="compositionally biased region" description="Basic and acidic residues" evidence="3">
    <location>
        <begin position="127"/>
        <end position="144"/>
    </location>
</feature>
<feature type="helix" evidence="6">
    <location>
        <begin position="25"/>
        <end position="50"/>
    </location>
</feature>
<feature type="strand" evidence="6">
    <location>
        <begin position="53"/>
        <end position="55"/>
    </location>
</feature>
<feature type="helix" evidence="6">
    <location>
        <begin position="58"/>
        <end position="66"/>
    </location>
</feature>
<feature type="helix" evidence="6">
    <location>
        <begin position="68"/>
        <end position="81"/>
    </location>
</feature>
<feature type="helix" evidence="6">
    <location>
        <begin position="84"/>
        <end position="87"/>
    </location>
</feature>
<feature type="helix" evidence="6">
    <location>
        <begin position="89"/>
        <end position="115"/>
    </location>
</feature>
<keyword id="KW-0002">3D-structure</keyword>
<keyword id="KW-0072">Autophagy</keyword>
<keyword id="KW-0175">Coiled coil</keyword>
<keyword id="KW-0472">Membrane</keyword>
<keyword id="KW-1185">Reference proteome</keyword>
<keyword id="KW-0812">Transmembrane</keyword>
<keyword id="KW-1133">Transmembrane helix</keyword>
<keyword id="KW-0926">Vacuole</keyword>
<name>VAM3_YEAST</name>
<sequence length="283" mass="32498">MSFFDIEAQSSKGNSQQEPQFSTNQKTKELSNLIETFAEQSRVLEKECTKIGSKRDSKELRYKIETELIPNCTSVRDKIESNILIHQNGKLSADFKNLKTKYQSLQQSYNQRKSLFPLKTPISPGTSKERKDIHPRTEAVRQDPESSYISIKVNEQSPLLHNEGQHQLQLQEEQEQQQQGLSQEELDFQTIIHQERSQQIGRIHTAVQEVNAIFHQLGSLVKEQGEQVTTIDENISHLHDNMQNANKQLTRADQHQRDRNKCGKVTLIIIIVVCMVVLLAVLS</sequence>
<gene>
    <name type="primary">VAM3</name>
    <name type="synonym">PTH1</name>
    <name type="ordered locus">YOR106W</name>
    <name type="ORF">YOR3220W</name>
</gene>
<protein>
    <recommendedName>
        <fullName>Syntaxin VAM3</fullName>
    </recommendedName>
    <alternativeName>
        <fullName>Vacuolar morphogenesis protein 3</fullName>
    </alternativeName>
</protein>
<dbReference type="EMBL" id="U57827">
    <property type="protein sequence ID" value="AAC49737.1"/>
    <property type="molecule type" value="Genomic_DNA"/>
</dbReference>
<dbReference type="EMBL" id="X94335">
    <property type="protein sequence ID" value="CAA64026.1"/>
    <property type="molecule type" value="Genomic_DNA"/>
</dbReference>
<dbReference type="EMBL" id="Z75014">
    <property type="protein sequence ID" value="CAA99304.1"/>
    <property type="molecule type" value="Genomic_DNA"/>
</dbReference>
<dbReference type="EMBL" id="BK006948">
    <property type="protein sequence ID" value="DAA10881.1"/>
    <property type="molecule type" value="Genomic_DNA"/>
</dbReference>
<dbReference type="PIR" id="S61664">
    <property type="entry name" value="S61664"/>
</dbReference>
<dbReference type="RefSeq" id="NP_014749.1">
    <property type="nucleotide sequence ID" value="NM_001183525.1"/>
</dbReference>
<dbReference type="PDB" id="1HS7">
    <property type="method" value="NMR"/>
    <property type="chains" value="A=23-119"/>
</dbReference>
<dbReference type="PDBsum" id="1HS7"/>
<dbReference type="BMRB" id="Q12241"/>
<dbReference type="SMR" id="Q12241"/>
<dbReference type="BioGRID" id="34502">
    <property type="interactions" value="522"/>
</dbReference>
<dbReference type="ComplexPortal" id="CPX-1887">
    <property type="entry name" value="Vacuolar SNARE complex VAM3-VTI1-VAM7-YKT6"/>
</dbReference>
<dbReference type="ComplexPortal" id="CPX-5401">
    <property type="entry name" value="Vacuolar SNARE complex VAM3-VTI1-VAM7-NYV1"/>
</dbReference>
<dbReference type="DIP" id="DIP-1726N"/>
<dbReference type="FunCoup" id="Q12241">
    <property type="interactions" value="103"/>
</dbReference>
<dbReference type="IntAct" id="Q12241">
    <property type="interactions" value="11"/>
</dbReference>
<dbReference type="MINT" id="Q12241"/>
<dbReference type="STRING" id="4932.YOR106W"/>
<dbReference type="TCDB" id="1.F.1.1.2">
    <property type="family name" value="the synaptosomal vesicle fusion pore (svf-pore) family"/>
</dbReference>
<dbReference type="iPTMnet" id="Q12241"/>
<dbReference type="SwissPalm" id="Q12241"/>
<dbReference type="PaxDb" id="4932-YOR106W"/>
<dbReference type="PeptideAtlas" id="Q12241"/>
<dbReference type="EnsemblFungi" id="YOR106W_mRNA">
    <property type="protein sequence ID" value="YOR106W"/>
    <property type="gene ID" value="YOR106W"/>
</dbReference>
<dbReference type="GeneID" id="854273"/>
<dbReference type="KEGG" id="sce:YOR106W"/>
<dbReference type="AGR" id="SGD:S000005632"/>
<dbReference type="SGD" id="S000005632">
    <property type="gene designation" value="VAM3"/>
</dbReference>
<dbReference type="VEuPathDB" id="FungiDB:YOR106W"/>
<dbReference type="eggNOG" id="KOG0811">
    <property type="taxonomic scope" value="Eukaryota"/>
</dbReference>
<dbReference type="GeneTree" id="ENSGT01000000214440"/>
<dbReference type="HOGENOM" id="CLU_059257_0_0_1"/>
<dbReference type="InParanoid" id="Q12241"/>
<dbReference type="OMA" id="RVHNTME"/>
<dbReference type="OrthoDB" id="364348at2759"/>
<dbReference type="BioCyc" id="YEAST:G3O-33637-MONOMER"/>
<dbReference type="Reactome" id="R-SCE-204005">
    <property type="pathway name" value="COPII-mediated vesicle transport"/>
</dbReference>
<dbReference type="BioGRID-ORCS" id="854273">
    <property type="hits" value="1 hit in 10 CRISPR screens"/>
</dbReference>
<dbReference type="EvolutionaryTrace" id="Q12241"/>
<dbReference type="PRO" id="PR:Q12241"/>
<dbReference type="Proteomes" id="UP000002311">
    <property type="component" value="Chromosome XV"/>
</dbReference>
<dbReference type="RNAct" id="Q12241">
    <property type="molecule type" value="protein"/>
</dbReference>
<dbReference type="GO" id="GO:0000421">
    <property type="term" value="C:autophagosome membrane"/>
    <property type="evidence" value="ECO:0000269"/>
    <property type="project" value="ComplexPortal"/>
</dbReference>
<dbReference type="GO" id="GO:0012505">
    <property type="term" value="C:endomembrane system"/>
    <property type="evidence" value="ECO:0000318"/>
    <property type="project" value="GO_Central"/>
</dbReference>
<dbReference type="GO" id="GO:0000329">
    <property type="term" value="C:fungal-type vacuole membrane"/>
    <property type="evidence" value="ECO:0000314"/>
    <property type="project" value="SGD"/>
</dbReference>
<dbReference type="GO" id="GO:0031201">
    <property type="term" value="C:SNARE complex"/>
    <property type="evidence" value="ECO:0000314"/>
    <property type="project" value="SGD"/>
</dbReference>
<dbReference type="GO" id="GO:0005774">
    <property type="term" value="C:vacuolar membrane"/>
    <property type="evidence" value="ECO:0000314"/>
    <property type="project" value="ComplexPortal"/>
</dbReference>
<dbReference type="GO" id="GO:0005484">
    <property type="term" value="F:SNAP receptor activity"/>
    <property type="evidence" value="ECO:0000314"/>
    <property type="project" value="SGD"/>
</dbReference>
<dbReference type="GO" id="GO:0000149">
    <property type="term" value="F:SNARE binding"/>
    <property type="evidence" value="ECO:0000318"/>
    <property type="project" value="GO_Central"/>
</dbReference>
<dbReference type="GO" id="GO:0061911">
    <property type="term" value="P:amphisome-lysosome fusion"/>
    <property type="evidence" value="ECO:0000303"/>
    <property type="project" value="ComplexPortal"/>
</dbReference>
<dbReference type="GO" id="GO:0097352">
    <property type="term" value="P:autophagosome maturation"/>
    <property type="evidence" value="ECO:0000315"/>
    <property type="project" value="SGD"/>
</dbReference>
<dbReference type="GO" id="GO:0006886">
    <property type="term" value="P:intracellular protein transport"/>
    <property type="evidence" value="ECO:0000318"/>
    <property type="project" value="GO_Central"/>
</dbReference>
<dbReference type="GO" id="GO:0034727">
    <property type="term" value="P:piecemeal microautophagy of the nucleus"/>
    <property type="evidence" value="ECO:0000315"/>
    <property type="project" value="SGD"/>
</dbReference>
<dbReference type="GO" id="GO:0007036">
    <property type="term" value="P:vacuolar calcium ion homeostasis"/>
    <property type="evidence" value="ECO:0000314"/>
    <property type="project" value="ComplexPortal"/>
</dbReference>
<dbReference type="GO" id="GO:0042144">
    <property type="term" value="P:vacuole fusion, non-autophagic"/>
    <property type="evidence" value="ECO:0000314"/>
    <property type="project" value="ComplexPortal"/>
</dbReference>
<dbReference type="GO" id="GO:0048278">
    <property type="term" value="P:vesicle docking"/>
    <property type="evidence" value="ECO:0000316"/>
    <property type="project" value="SGD"/>
</dbReference>
<dbReference type="GO" id="GO:0006906">
    <property type="term" value="P:vesicle fusion"/>
    <property type="evidence" value="ECO:0000314"/>
    <property type="project" value="SGD"/>
</dbReference>
<dbReference type="GO" id="GO:0051469">
    <property type="term" value="P:vesicle fusion with vacuole"/>
    <property type="evidence" value="ECO:0000316"/>
    <property type="project" value="SGD"/>
</dbReference>
<dbReference type="CDD" id="cd15840">
    <property type="entry name" value="SNARE_Qa"/>
    <property type="match status" value="1"/>
</dbReference>
<dbReference type="FunFam" id="1.20.5.110:FF:000120">
    <property type="entry name" value="Vam3p"/>
    <property type="match status" value="1"/>
</dbReference>
<dbReference type="Gene3D" id="1.20.5.110">
    <property type="match status" value="1"/>
</dbReference>
<dbReference type="Gene3D" id="1.20.58.70">
    <property type="match status" value="1"/>
</dbReference>
<dbReference type="InterPro" id="IPR010989">
    <property type="entry name" value="SNARE"/>
</dbReference>
<dbReference type="InterPro" id="IPR045242">
    <property type="entry name" value="Syntaxin"/>
</dbReference>
<dbReference type="InterPro" id="IPR006012">
    <property type="entry name" value="Syntaxin/epimorphin_CS"/>
</dbReference>
<dbReference type="InterPro" id="IPR006011">
    <property type="entry name" value="Syntaxin_N"/>
</dbReference>
<dbReference type="InterPro" id="IPR000727">
    <property type="entry name" value="T_SNARE_dom"/>
</dbReference>
<dbReference type="PANTHER" id="PTHR19957">
    <property type="entry name" value="SYNTAXIN"/>
    <property type="match status" value="1"/>
</dbReference>
<dbReference type="PANTHER" id="PTHR19957:SF295">
    <property type="entry name" value="SYNTAXIN VAM3"/>
    <property type="match status" value="1"/>
</dbReference>
<dbReference type="Pfam" id="PF05739">
    <property type="entry name" value="SNARE"/>
    <property type="match status" value="1"/>
</dbReference>
<dbReference type="Pfam" id="PF14523">
    <property type="entry name" value="Syntaxin_2"/>
    <property type="match status" value="1"/>
</dbReference>
<dbReference type="SMART" id="SM00397">
    <property type="entry name" value="t_SNARE"/>
    <property type="match status" value="1"/>
</dbReference>
<dbReference type="SUPFAM" id="SSF58038">
    <property type="entry name" value="SNARE fusion complex"/>
    <property type="match status" value="1"/>
</dbReference>
<dbReference type="SUPFAM" id="SSF47661">
    <property type="entry name" value="t-snare proteins"/>
    <property type="match status" value="1"/>
</dbReference>
<dbReference type="PROSITE" id="PS00914">
    <property type="entry name" value="SYNTAXIN"/>
    <property type="match status" value="1"/>
</dbReference>
<dbReference type="PROSITE" id="PS50192">
    <property type="entry name" value="T_SNARE"/>
    <property type="match status" value="1"/>
</dbReference>
<reference key="1">
    <citation type="journal article" date="1997" name="J. Cell Sci.">
        <title>Vam3p, a new member of syntaxin related protein, is required for vacuolar assembly in the yeast Saccharomyces cerevisiae.</title>
        <authorList>
            <person name="Wada Y."/>
            <person name="Nakamura N."/>
            <person name="Ohsumi Y."/>
            <person name="Hirata A."/>
        </authorList>
    </citation>
    <scope>NUCLEOTIDE SEQUENCE [GENOMIC DNA]</scope>
    <source>
        <strain>ATCC 26786 / X2180-1A</strain>
    </source>
</reference>
<reference key="2">
    <citation type="journal article" date="1997" name="Yeast">
        <title>DNA sequencing and analysis of 130 kb from yeast chromosome XV.</title>
        <authorList>
            <person name="Voss H."/>
            <person name="Benes V."/>
            <person name="Andrade M.A."/>
            <person name="Valencia A."/>
            <person name="Rechmann S."/>
            <person name="Teodoru C."/>
            <person name="Schwager C."/>
            <person name="Paces V."/>
            <person name="Sander C."/>
            <person name="Ansorge W."/>
        </authorList>
    </citation>
    <scope>NUCLEOTIDE SEQUENCE [GENOMIC DNA]</scope>
</reference>
<reference key="3">
    <citation type="journal article" date="1997" name="Nature">
        <title>The nucleotide sequence of Saccharomyces cerevisiae chromosome XV.</title>
        <authorList>
            <person name="Dujon B."/>
            <person name="Albermann K."/>
            <person name="Aldea M."/>
            <person name="Alexandraki D."/>
            <person name="Ansorge W."/>
            <person name="Arino J."/>
            <person name="Benes V."/>
            <person name="Bohn C."/>
            <person name="Bolotin-Fukuhara M."/>
            <person name="Bordonne R."/>
            <person name="Boyer J."/>
            <person name="Camasses A."/>
            <person name="Casamayor A."/>
            <person name="Casas C."/>
            <person name="Cheret G."/>
            <person name="Cziepluch C."/>
            <person name="Daignan-Fornier B."/>
            <person name="Dang V.-D."/>
            <person name="de Haan M."/>
            <person name="Delius H."/>
            <person name="Durand P."/>
            <person name="Fairhead C."/>
            <person name="Feldmann H."/>
            <person name="Gaillon L."/>
            <person name="Galisson F."/>
            <person name="Gamo F.-J."/>
            <person name="Gancedo C."/>
            <person name="Goffeau A."/>
            <person name="Goulding S.E."/>
            <person name="Grivell L.A."/>
            <person name="Habbig B."/>
            <person name="Hand N.J."/>
            <person name="Hani J."/>
            <person name="Hattenhorst U."/>
            <person name="Hebling U."/>
            <person name="Hernando Y."/>
            <person name="Herrero E."/>
            <person name="Heumann K."/>
            <person name="Hiesel R."/>
            <person name="Hilger F."/>
            <person name="Hofmann B."/>
            <person name="Hollenberg C.P."/>
            <person name="Hughes B."/>
            <person name="Jauniaux J.-C."/>
            <person name="Kalogeropoulos A."/>
            <person name="Katsoulou C."/>
            <person name="Kordes E."/>
            <person name="Lafuente M.J."/>
            <person name="Landt O."/>
            <person name="Louis E.J."/>
            <person name="Maarse A.C."/>
            <person name="Madania A."/>
            <person name="Mannhaupt G."/>
            <person name="Marck C."/>
            <person name="Martin R.P."/>
            <person name="Mewes H.-W."/>
            <person name="Michaux G."/>
            <person name="Paces V."/>
            <person name="Parle-McDermott A.G."/>
            <person name="Pearson B.M."/>
            <person name="Perrin A."/>
            <person name="Pettersson B."/>
            <person name="Poch O."/>
            <person name="Pohl T.M."/>
            <person name="Poirey R."/>
            <person name="Portetelle D."/>
            <person name="Pujol A."/>
            <person name="Purnelle B."/>
            <person name="Ramezani Rad M."/>
            <person name="Rechmann S."/>
            <person name="Schwager C."/>
            <person name="Schweizer M."/>
            <person name="Sor F."/>
            <person name="Sterky F."/>
            <person name="Tarassov I.A."/>
            <person name="Teodoru C."/>
            <person name="Tettelin H."/>
            <person name="Thierry A."/>
            <person name="Tobiasch E."/>
            <person name="Tzermia M."/>
            <person name="Uhlen M."/>
            <person name="Unseld M."/>
            <person name="Valens M."/>
            <person name="Vandenbol M."/>
            <person name="Vetter I."/>
            <person name="Vlcek C."/>
            <person name="Voet M."/>
            <person name="Volckaert G."/>
            <person name="Voss H."/>
            <person name="Wambutt R."/>
            <person name="Wedler H."/>
            <person name="Wiemann S."/>
            <person name="Winsor B."/>
            <person name="Wolfe K.H."/>
            <person name="Zollner A."/>
            <person name="Zumstein E."/>
            <person name="Kleine K."/>
        </authorList>
    </citation>
    <scope>NUCLEOTIDE SEQUENCE [LARGE SCALE GENOMIC DNA]</scope>
    <source>
        <strain>ATCC 204508 / S288c</strain>
    </source>
</reference>
<reference key="4">
    <citation type="journal article" date="2014" name="G3 (Bethesda)">
        <title>The reference genome sequence of Saccharomyces cerevisiae: Then and now.</title>
        <authorList>
            <person name="Engel S.R."/>
            <person name="Dietrich F.S."/>
            <person name="Fisk D.G."/>
            <person name="Binkley G."/>
            <person name="Balakrishnan R."/>
            <person name="Costanzo M.C."/>
            <person name="Dwight S.S."/>
            <person name="Hitz B.C."/>
            <person name="Karra K."/>
            <person name="Nash R.S."/>
            <person name="Weng S."/>
            <person name="Wong E.D."/>
            <person name="Lloyd P."/>
            <person name="Skrzypek M.S."/>
            <person name="Miyasato S.R."/>
            <person name="Simison M."/>
            <person name="Cherry J.M."/>
        </authorList>
    </citation>
    <scope>GENOME REANNOTATION</scope>
    <source>
        <strain>ATCC 204508 / S288c</strain>
    </source>
</reference>
<reference key="5">
    <citation type="journal article" date="1997" name="J. Cell Biol.">
        <title>A multispecificity syntaxin homologue, Vam3p, essential for autophagic and biosynthetic protein transport to the vacuole.</title>
        <authorList>
            <person name="Darsow T."/>
            <person name="Rieder S.E."/>
            <person name="Emr S.D."/>
        </authorList>
    </citation>
    <scope>CHARACTERIZATION</scope>
</reference>
<reference key="6">
    <citation type="journal article" date="1999" name="J. Biol. Chem.">
        <title>A syntaxin homolog encoded by VAM3 mediates down-regulation of a yeast G protein-coupled receptor.</title>
        <authorList>
            <person name="Stefan C.J."/>
            <person name="Blumer K.J."/>
        </authorList>
    </citation>
    <scope>CHARACTERIZATION</scope>
</reference>
<reference key="7">
    <citation type="journal article" date="2003" name="Nature">
        <title>Global analysis of protein expression in yeast.</title>
        <authorList>
            <person name="Ghaemmaghami S."/>
            <person name="Huh W.-K."/>
            <person name="Bower K."/>
            <person name="Howson R.W."/>
            <person name="Belle A."/>
            <person name="Dephoure N."/>
            <person name="O'Shea E.K."/>
            <person name="Weissman J.S."/>
        </authorList>
    </citation>
    <scope>LEVEL OF PROTEIN EXPRESSION [LARGE SCALE ANALYSIS]</scope>
</reference>
<reference key="8">
    <citation type="journal article" date="2001" name="Nat. Struct. Biol.">
        <title>Vam3p structure reveals conserved and divergent properties of syntaxins.</title>
        <authorList>
            <person name="Dulubova I."/>
            <person name="Yamaguchi T."/>
            <person name="Wang Y."/>
            <person name="Suedhof T.C."/>
            <person name="Rizo J."/>
        </authorList>
    </citation>
    <scope>STRUCTURE BY NMR OF 23-119</scope>
</reference>